<feature type="chain" id="PRO_0000147376" description="Iron-sulfur cluster assembly SufBD family protein slr0074">
    <location>
        <begin position="1"/>
        <end position="480"/>
    </location>
</feature>
<organism>
    <name type="scientific">Synechocystis sp. (strain ATCC 27184 / PCC 6803 / Kazusa)</name>
    <dbReference type="NCBI Taxonomy" id="1111708"/>
    <lineage>
        <taxon>Bacteria</taxon>
        <taxon>Bacillati</taxon>
        <taxon>Cyanobacteriota</taxon>
        <taxon>Cyanophyceae</taxon>
        <taxon>Synechococcales</taxon>
        <taxon>Merismopediaceae</taxon>
        <taxon>Synechocystis</taxon>
    </lineage>
</organism>
<name>Y074_SYNY3</name>
<comment type="similarity">
    <text evidence="1">Belongs to the iron-sulfur cluster assembly SufBD family.</text>
</comment>
<sequence>MSSTTVKNLVNQPYKYGFVTNIEADAIPRGLSEDVVRLISAKKNEPEFMLDFRLRAYRHWLTMAEPTWPAVHYPPIDYQDIIYYSAPKQSKKKLESLDEVDPALLETFEKLGIPLSEQKRLSNVAVDAIFDSVSIGTTFKEKLAEDGVIFCSISEALQEHPDLVQKYLGSVVPTADNFFAALNSAVFSDGSFVFIPKGVKCPMELSTYFRINNGDTGQFERTLIIAEEGASVSYLEGCTAPMYDTNQLHAAVVELVALDNADIKYSTVQNWYAGDENGKGGIYNFVTKRGLCKGVNSKISWTQVETGSAITWKYPSCVLVGDNSVGEFYSIALTNNKQQADTGTKMIHIGKNTRSIIISKGISAGNSANSYRGLVKMGPKAQGARNYSQCDSMLIGDRAAANTFPYIQVDNNTAKVEHEASTSKIGEDQLFYFAQRGISEEDAVSMLVSGFCKDVLNELPMEFAAEADKLLSLKLEGTVG</sequence>
<protein>
    <recommendedName>
        <fullName>Iron-sulfur cluster assembly SufBD family protein slr0074</fullName>
    </recommendedName>
</protein>
<dbReference type="EMBL" id="BA000022">
    <property type="protein sequence ID" value="BAA10542.1"/>
    <property type="molecule type" value="Genomic_DNA"/>
</dbReference>
<dbReference type="PIR" id="S76598">
    <property type="entry name" value="S76598"/>
</dbReference>
<dbReference type="SMR" id="Q55790"/>
<dbReference type="FunCoup" id="Q55790">
    <property type="interactions" value="229"/>
</dbReference>
<dbReference type="STRING" id="1148.gene:10500046"/>
<dbReference type="PaxDb" id="1148-1001705"/>
<dbReference type="EnsemblBacteria" id="BAA10542">
    <property type="protein sequence ID" value="BAA10542"/>
    <property type="gene ID" value="BAA10542"/>
</dbReference>
<dbReference type="KEGG" id="syn:slr0074"/>
<dbReference type="eggNOG" id="COG0719">
    <property type="taxonomic scope" value="Bacteria"/>
</dbReference>
<dbReference type="InParanoid" id="Q55790"/>
<dbReference type="PhylomeDB" id="Q55790"/>
<dbReference type="Proteomes" id="UP000001425">
    <property type="component" value="Chromosome"/>
</dbReference>
<dbReference type="GO" id="GO:0016226">
    <property type="term" value="P:iron-sulfur cluster assembly"/>
    <property type="evidence" value="ECO:0007669"/>
    <property type="project" value="InterPro"/>
</dbReference>
<dbReference type="InterPro" id="IPR055346">
    <property type="entry name" value="Fe-S_cluster_assembly_SufBD"/>
</dbReference>
<dbReference type="InterPro" id="IPR010231">
    <property type="entry name" value="SUF_FeS_clus_asmbl_SufB"/>
</dbReference>
<dbReference type="InterPro" id="IPR000825">
    <property type="entry name" value="SUF_FeS_clus_asmbl_SufBD_core"/>
</dbReference>
<dbReference type="InterPro" id="IPR037284">
    <property type="entry name" value="SUF_FeS_clus_asmbl_SufBD_sf"/>
</dbReference>
<dbReference type="InterPro" id="IPR045595">
    <property type="entry name" value="SufBD_N"/>
</dbReference>
<dbReference type="NCBIfam" id="NF008773">
    <property type="entry name" value="PRK11814.1"/>
    <property type="match status" value="1"/>
</dbReference>
<dbReference type="NCBIfam" id="TIGR01980">
    <property type="entry name" value="sufB"/>
    <property type="match status" value="1"/>
</dbReference>
<dbReference type="PANTHER" id="PTHR30508">
    <property type="entry name" value="FES CLUSTER ASSEMBLY PROTEIN SUF"/>
    <property type="match status" value="1"/>
</dbReference>
<dbReference type="PANTHER" id="PTHR30508:SF1">
    <property type="entry name" value="UPF0051 PROTEIN ABCI8, CHLOROPLASTIC-RELATED"/>
    <property type="match status" value="1"/>
</dbReference>
<dbReference type="Pfam" id="PF01458">
    <property type="entry name" value="SUFBD_core"/>
    <property type="match status" value="1"/>
</dbReference>
<dbReference type="Pfam" id="PF19295">
    <property type="entry name" value="SufBD_N"/>
    <property type="match status" value="1"/>
</dbReference>
<dbReference type="SUPFAM" id="SSF101960">
    <property type="entry name" value="Stabilizer of iron transporter SufD"/>
    <property type="match status" value="1"/>
</dbReference>
<accession>Q55790</accession>
<evidence type="ECO:0000305" key="1"/>
<proteinExistence type="inferred from homology"/>
<keyword id="KW-1185">Reference proteome</keyword>
<reference key="1">
    <citation type="journal article" date="1995" name="DNA Res.">
        <title>Sequence analysis of the genome of the unicellular cyanobacterium Synechocystis sp. strain PCC6803. I. Sequence features in the 1 Mb region from map positions 64% to 92% of the genome.</title>
        <authorList>
            <person name="Kaneko T."/>
            <person name="Tanaka A."/>
            <person name="Sato S."/>
            <person name="Kotani H."/>
            <person name="Sazuka T."/>
            <person name="Miyajima N."/>
            <person name="Sugiura M."/>
            <person name="Tabata S."/>
        </authorList>
    </citation>
    <scope>NUCLEOTIDE SEQUENCE [LARGE SCALE GENOMIC DNA]</scope>
    <source>
        <strain>ATCC 27184 / PCC 6803 / N-1</strain>
    </source>
</reference>
<reference key="2">
    <citation type="journal article" date="1996" name="DNA Res.">
        <title>Sequence analysis of the genome of the unicellular cyanobacterium Synechocystis sp. strain PCC6803. II. Sequence determination of the entire genome and assignment of potential protein-coding regions.</title>
        <authorList>
            <person name="Kaneko T."/>
            <person name="Sato S."/>
            <person name="Kotani H."/>
            <person name="Tanaka A."/>
            <person name="Asamizu E."/>
            <person name="Nakamura Y."/>
            <person name="Miyajima N."/>
            <person name="Hirosawa M."/>
            <person name="Sugiura M."/>
            <person name="Sasamoto S."/>
            <person name="Kimura T."/>
            <person name="Hosouchi T."/>
            <person name="Matsuno A."/>
            <person name="Muraki A."/>
            <person name="Nakazaki N."/>
            <person name="Naruo K."/>
            <person name="Okumura S."/>
            <person name="Shimpo S."/>
            <person name="Takeuchi C."/>
            <person name="Wada T."/>
            <person name="Watanabe A."/>
            <person name="Yamada M."/>
            <person name="Yasuda M."/>
            <person name="Tabata S."/>
        </authorList>
    </citation>
    <scope>NUCLEOTIDE SEQUENCE [LARGE SCALE GENOMIC DNA]</scope>
    <source>
        <strain>ATCC 27184 / PCC 6803 / Kazusa</strain>
    </source>
</reference>
<gene>
    <name type="ordered locus">slr0074</name>
</gene>